<evidence type="ECO:0000255" key="1">
    <source>
        <dbReference type="HAMAP-Rule" id="MF_00664"/>
    </source>
</evidence>
<keyword id="KW-1003">Cell membrane</keyword>
<keyword id="KW-0210">Decarboxylase</keyword>
<keyword id="KW-0444">Lipid biosynthesis</keyword>
<keyword id="KW-0443">Lipid metabolism</keyword>
<keyword id="KW-0456">Lyase</keyword>
<keyword id="KW-0472">Membrane</keyword>
<keyword id="KW-0594">Phospholipid biosynthesis</keyword>
<keyword id="KW-1208">Phospholipid metabolism</keyword>
<keyword id="KW-0670">Pyruvate</keyword>
<keyword id="KW-1185">Reference proteome</keyword>
<keyword id="KW-0865">Zymogen</keyword>
<gene>
    <name evidence="1" type="primary">psd</name>
    <name type="ordered locus">Avi_1471</name>
</gene>
<feature type="chain" id="PRO_1000192888" description="Phosphatidylserine decarboxylase beta chain" evidence="1">
    <location>
        <begin position="1"/>
        <end position="189"/>
    </location>
</feature>
<feature type="chain" id="PRO_1000192889" description="Phosphatidylserine decarboxylase alpha chain" evidence="1">
    <location>
        <begin position="190"/>
        <end position="232"/>
    </location>
</feature>
<feature type="active site" description="Schiff-base intermediate with substrate; via pyruvic acid" evidence="1">
    <location>
        <position position="190"/>
    </location>
</feature>
<feature type="site" description="Cleavage (non-hydrolytic); by autocatalysis" evidence="1">
    <location>
        <begin position="189"/>
        <end position="190"/>
    </location>
</feature>
<feature type="modified residue" description="Pyruvic acid (Ser); by autocatalysis" evidence="1">
    <location>
        <position position="190"/>
    </location>
</feature>
<comment type="function">
    <text evidence="1">Catalyzes the formation of phosphatidylethanolamine (PtdEtn) from phosphatidylserine (PtdSer).</text>
</comment>
<comment type="catalytic activity">
    <reaction evidence="1">
        <text>a 1,2-diacyl-sn-glycero-3-phospho-L-serine + H(+) = a 1,2-diacyl-sn-glycero-3-phosphoethanolamine + CO2</text>
        <dbReference type="Rhea" id="RHEA:20828"/>
        <dbReference type="ChEBI" id="CHEBI:15378"/>
        <dbReference type="ChEBI" id="CHEBI:16526"/>
        <dbReference type="ChEBI" id="CHEBI:57262"/>
        <dbReference type="ChEBI" id="CHEBI:64612"/>
        <dbReference type="EC" id="4.1.1.65"/>
    </reaction>
</comment>
<comment type="cofactor">
    <cofactor evidence="1">
        <name>pyruvate</name>
        <dbReference type="ChEBI" id="CHEBI:15361"/>
    </cofactor>
    <text evidence="1">Binds 1 pyruvoyl group covalently per subunit.</text>
</comment>
<comment type="pathway">
    <text evidence="1">Phospholipid metabolism; phosphatidylethanolamine biosynthesis; phosphatidylethanolamine from CDP-diacylglycerol: step 2/2.</text>
</comment>
<comment type="subunit">
    <text evidence="1">Heterodimer of a large membrane-associated beta subunit and a small pyruvoyl-containing alpha subunit.</text>
</comment>
<comment type="subcellular location">
    <subcellularLocation>
        <location evidence="1">Cell membrane</location>
        <topology evidence="1">Peripheral membrane protein</topology>
    </subcellularLocation>
</comment>
<comment type="PTM">
    <text evidence="1">Is synthesized initially as an inactive proenzyme. Formation of the active enzyme involves a self-maturation process in which the active site pyruvoyl group is generated from an internal serine residue via an autocatalytic post-translational modification. Two non-identical subunits are generated from the proenzyme in this reaction, and the pyruvate is formed at the N-terminus of the alpha chain, which is derived from the carboxyl end of the proenzyme. The post-translation cleavage follows an unusual pathway, termed non-hydrolytic serinolysis, in which the side chain hydroxyl group of the serine supplies its oxygen atom to form the C-terminus of the beta chain, while the remainder of the serine residue undergoes an oxidative deamination to produce ammonia and the pyruvoyl prosthetic group on the alpha chain.</text>
</comment>
<comment type="similarity">
    <text evidence="1">Belongs to the phosphatidylserine decarboxylase family. PSD-A subfamily.</text>
</comment>
<sequence length="232" mass="25601">MSLFDTIRNTLVPVHKEGYIFVGAFFVGSLVLGWIWEPLFWVGLLLTLWCAYFFRDPERLTPQDDDLVVSPADGRVSMIQMVIPPEELQLSSDPMLRISIFMNVFDVHINRAPVRGAIRQVVYREGSFLNAELDKASTDNERNSLVIDGPRGAIGVVQIAGLVARRILCWSVPGQALGVGERFGLIRFGSRLDVYLPAGAEPRVAVGQRSIGGETVIAEYGSAKGPVISRRS</sequence>
<reference key="1">
    <citation type="journal article" date="2009" name="J. Bacteriol.">
        <title>Genome sequences of three Agrobacterium biovars help elucidate the evolution of multichromosome genomes in bacteria.</title>
        <authorList>
            <person name="Slater S.C."/>
            <person name="Goldman B.S."/>
            <person name="Goodner B."/>
            <person name="Setubal J.C."/>
            <person name="Farrand S.K."/>
            <person name="Nester E.W."/>
            <person name="Burr T.J."/>
            <person name="Banta L."/>
            <person name="Dickerman A.W."/>
            <person name="Paulsen I."/>
            <person name="Otten L."/>
            <person name="Suen G."/>
            <person name="Welch R."/>
            <person name="Almeida N.F."/>
            <person name="Arnold F."/>
            <person name="Burton O.T."/>
            <person name="Du Z."/>
            <person name="Ewing A."/>
            <person name="Godsy E."/>
            <person name="Heisel S."/>
            <person name="Houmiel K.L."/>
            <person name="Jhaveri J."/>
            <person name="Lu J."/>
            <person name="Miller N.M."/>
            <person name="Norton S."/>
            <person name="Chen Q."/>
            <person name="Phoolcharoen W."/>
            <person name="Ohlin V."/>
            <person name="Ondrusek D."/>
            <person name="Pride N."/>
            <person name="Stricklin S.L."/>
            <person name="Sun J."/>
            <person name="Wheeler C."/>
            <person name="Wilson L."/>
            <person name="Zhu H."/>
            <person name="Wood D.W."/>
        </authorList>
    </citation>
    <scope>NUCLEOTIDE SEQUENCE [LARGE SCALE GENOMIC DNA]</scope>
    <source>
        <strain>ATCC BAA-846 / DSM 112012 / S4</strain>
    </source>
</reference>
<proteinExistence type="inferred from homology"/>
<dbReference type="EC" id="4.1.1.65" evidence="1"/>
<dbReference type="EMBL" id="CP000633">
    <property type="protein sequence ID" value="ACM36050.1"/>
    <property type="molecule type" value="Genomic_DNA"/>
</dbReference>
<dbReference type="RefSeq" id="WP_015915474.1">
    <property type="nucleotide sequence ID" value="NC_011989.1"/>
</dbReference>
<dbReference type="STRING" id="311402.Avi_1471"/>
<dbReference type="KEGG" id="avi:Avi_1471"/>
<dbReference type="eggNOG" id="COG0688">
    <property type="taxonomic scope" value="Bacteria"/>
</dbReference>
<dbReference type="HOGENOM" id="CLU_072492_0_0_5"/>
<dbReference type="UniPathway" id="UPA00558">
    <property type="reaction ID" value="UER00616"/>
</dbReference>
<dbReference type="Proteomes" id="UP000001596">
    <property type="component" value="Chromosome 1"/>
</dbReference>
<dbReference type="GO" id="GO:0005886">
    <property type="term" value="C:plasma membrane"/>
    <property type="evidence" value="ECO:0007669"/>
    <property type="project" value="UniProtKB-SubCell"/>
</dbReference>
<dbReference type="GO" id="GO:0004609">
    <property type="term" value="F:phosphatidylserine decarboxylase activity"/>
    <property type="evidence" value="ECO:0007669"/>
    <property type="project" value="UniProtKB-UniRule"/>
</dbReference>
<dbReference type="GO" id="GO:0006646">
    <property type="term" value="P:phosphatidylethanolamine biosynthetic process"/>
    <property type="evidence" value="ECO:0007669"/>
    <property type="project" value="UniProtKB-UniRule"/>
</dbReference>
<dbReference type="HAMAP" id="MF_00664">
    <property type="entry name" value="PS_decarb_PSD_A"/>
    <property type="match status" value="1"/>
</dbReference>
<dbReference type="InterPro" id="IPR003817">
    <property type="entry name" value="PS_Dcarbxylase"/>
</dbReference>
<dbReference type="InterPro" id="IPR033175">
    <property type="entry name" value="PSD-A"/>
</dbReference>
<dbReference type="NCBIfam" id="NF003677">
    <property type="entry name" value="PRK05305.1-1"/>
    <property type="match status" value="1"/>
</dbReference>
<dbReference type="NCBIfam" id="NF003678">
    <property type="entry name" value="PRK05305.1-2"/>
    <property type="match status" value="1"/>
</dbReference>
<dbReference type="NCBIfam" id="NF003679">
    <property type="entry name" value="PRK05305.1-3"/>
    <property type="match status" value="1"/>
</dbReference>
<dbReference type="NCBIfam" id="NF003685">
    <property type="entry name" value="PRK05305.2-5"/>
    <property type="match status" value="1"/>
</dbReference>
<dbReference type="PANTHER" id="PTHR35809">
    <property type="entry name" value="ARCHAETIDYLSERINE DECARBOXYLASE PROENZYME-RELATED"/>
    <property type="match status" value="1"/>
</dbReference>
<dbReference type="PANTHER" id="PTHR35809:SF1">
    <property type="entry name" value="ARCHAETIDYLSERINE DECARBOXYLASE PROENZYME-RELATED"/>
    <property type="match status" value="1"/>
</dbReference>
<dbReference type="Pfam" id="PF02666">
    <property type="entry name" value="PS_Dcarbxylase"/>
    <property type="match status" value="1"/>
</dbReference>
<protein>
    <recommendedName>
        <fullName evidence="1">Phosphatidylserine decarboxylase proenzyme</fullName>
        <ecNumber evidence="1">4.1.1.65</ecNumber>
    </recommendedName>
    <component>
        <recommendedName>
            <fullName evidence="1">Phosphatidylserine decarboxylase alpha chain</fullName>
        </recommendedName>
    </component>
    <component>
        <recommendedName>
            <fullName evidence="1">Phosphatidylserine decarboxylase beta chain</fullName>
        </recommendedName>
    </component>
</protein>
<accession>B9JUQ5</accession>
<name>PSD_ALLAM</name>
<organism>
    <name type="scientific">Allorhizobium ampelinum (strain ATCC BAA-846 / DSM 112012 / S4)</name>
    <name type="common">Agrobacterium vitis (strain S4)</name>
    <dbReference type="NCBI Taxonomy" id="311402"/>
    <lineage>
        <taxon>Bacteria</taxon>
        <taxon>Pseudomonadati</taxon>
        <taxon>Pseudomonadota</taxon>
        <taxon>Alphaproteobacteria</taxon>
        <taxon>Hyphomicrobiales</taxon>
        <taxon>Rhizobiaceae</taxon>
        <taxon>Rhizobium/Agrobacterium group</taxon>
        <taxon>Allorhizobium</taxon>
        <taxon>Allorhizobium ampelinum</taxon>
    </lineage>
</organism>